<proteinExistence type="inferred from homology"/>
<dbReference type="EC" id="1.1.1.290" evidence="1"/>
<dbReference type="EMBL" id="CP000503">
    <property type="protein sequence ID" value="ABM24402.1"/>
    <property type="molecule type" value="Genomic_DNA"/>
</dbReference>
<dbReference type="RefSeq" id="WP_011788902.1">
    <property type="nucleotide sequence ID" value="NC_008750.1"/>
</dbReference>
<dbReference type="SMR" id="A1RIA7"/>
<dbReference type="KEGG" id="shw:Sputw3181_1564"/>
<dbReference type="HOGENOM" id="CLU_019796_4_0_6"/>
<dbReference type="UniPathway" id="UPA00244">
    <property type="reaction ID" value="UER00310"/>
</dbReference>
<dbReference type="Proteomes" id="UP000002597">
    <property type="component" value="Chromosome"/>
</dbReference>
<dbReference type="GO" id="GO:0005737">
    <property type="term" value="C:cytoplasm"/>
    <property type="evidence" value="ECO:0007669"/>
    <property type="project" value="UniProtKB-SubCell"/>
</dbReference>
<dbReference type="GO" id="GO:0033711">
    <property type="term" value="F:4-phosphoerythronate dehydrogenase activity"/>
    <property type="evidence" value="ECO:0007669"/>
    <property type="project" value="UniProtKB-EC"/>
</dbReference>
<dbReference type="GO" id="GO:0051287">
    <property type="term" value="F:NAD binding"/>
    <property type="evidence" value="ECO:0007669"/>
    <property type="project" value="InterPro"/>
</dbReference>
<dbReference type="GO" id="GO:0046983">
    <property type="term" value="F:protein dimerization activity"/>
    <property type="evidence" value="ECO:0007669"/>
    <property type="project" value="InterPro"/>
</dbReference>
<dbReference type="GO" id="GO:0008615">
    <property type="term" value="P:pyridoxine biosynthetic process"/>
    <property type="evidence" value="ECO:0007669"/>
    <property type="project" value="UniProtKB-UniRule"/>
</dbReference>
<dbReference type="CDD" id="cd12158">
    <property type="entry name" value="ErythrP_dh"/>
    <property type="match status" value="1"/>
</dbReference>
<dbReference type="Gene3D" id="3.30.1370.170">
    <property type="match status" value="1"/>
</dbReference>
<dbReference type="Gene3D" id="3.40.50.720">
    <property type="entry name" value="NAD(P)-binding Rossmann-like Domain"/>
    <property type="match status" value="2"/>
</dbReference>
<dbReference type="HAMAP" id="MF_01825">
    <property type="entry name" value="PdxB"/>
    <property type="match status" value="1"/>
</dbReference>
<dbReference type="InterPro" id="IPR050418">
    <property type="entry name" value="D-iso_2-hydroxyacid_DH_PdxB"/>
</dbReference>
<dbReference type="InterPro" id="IPR006139">
    <property type="entry name" value="D-isomer_2_OHA_DH_cat_dom"/>
</dbReference>
<dbReference type="InterPro" id="IPR029753">
    <property type="entry name" value="D-isomer_DH_CS"/>
</dbReference>
<dbReference type="InterPro" id="IPR006140">
    <property type="entry name" value="D-isomer_DH_NAD-bd"/>
</dbReference>
<dbReference type="InterPro" id="IPR020921">
    <property type="entry name" value="Erythronate-4-P_DHase"/>
</dbReference>
<dbReference type="InterPro" id="IPR024531">
    <property type="entry name" value="Erythronate-4-P_DHase_dimer"/>
</dbReference>
<dbReference type="InterPro" id="IPR036291">
    <property type="entry name" value="NAD(P)-bd_dom_sf"/>
</dbReference>
<dbReference type="InterPro" id="IPR038251">
    <property type="entry name" value="PdxB_dimer_sf"/>
</dbReference>
<dbReference type="PANTHER" id="PTHR43761:SF1">
    <property type="entry name" value="D-ISOMER SPECIFIC 2-HYDROXYACID DEHYDROGENASE CATALYTIC DOMAIN-CONTAINING PROTEIN-RELATED"/>
    <property type="match status" value="1"/>
</dbReference>
<dbReference type="PANTHER" id="PTHR43761">
    <property type="entry name" value="D-ISOMER SPECIFIC 2-HYDROXYACID DEHYDROGENASE FAMILY PROTEIN (AFU_ORTHOLOGUE AFUA_1G13630)"/>
    <property type="match status" value="1"/>
</dbReference>
<dbReference type="Pfam" id="PF00389">
    <property type="entry name" value="2-Hacid_dh"/>
    <property type="match status" value="1"/>
</dbReference>
<dbReference type="Pfam" id="PF02826">
    <property type="entry name" value="2-Hacid_dh_C"/>
    <property type="match status" value="1"/>
</dbReference>
<dbReference type="Pfam" id="PF11890">
    <property type="entry name" value="DUF3410"/>
    <property type="match status" value="1"/>
</dbReference>
<dbReference type="SUPFAM" id="SSF52283">
    <property type="entry name" value="Formate/glycerate dehydrogenase catalytic domain-like"/>
    <property type="match status" value="1"/>
</dbReference>
<dbReference type="SUPFAM" id="SSF51735">
    <property type="entry name" value="NAD(P)-binding Rossmann-fold domains"/>
    <property type="match status" value="1"/>
</dbReference>
<dbReference type="PROSITE" id="PS00671">
    <property type="entry name" value="D_2_HYDROXYACID_DH_3"/>
    <property type="match status" value="1"/>
</dbReference>
<keyword id="KW-0963">Cytoplasm</keyword>
<keyword id="KW-0520">NAD</keyword>
<keyword id="KW-0560">Oxidoreductase</keyword>
<keyword id="KW-0664">Pyridoxine biosynthesis</keyword>
<gene>
    <name evidence="1" type="primary">pdxB</name>
    <name type="ordered locus">Sputw3181_1564</name>
</gene>
<feature type="chain" id="PRO_0000297472" description="Erythronate-4-phosphate dehydrogenase">
    <location>
        <begin position="1"/>
        <end position="376"/>
    </location>
</feature>
<feature type="active site" evidence="1">
    <location>
        <position position="209"/>
    </location>
</feature>
<feature type="active site" evidence="1">
    <location>
        <position position="238"/>
    </location>
</feature>
<feature type="active site" description="Proton donor" evidence="1">
    <location>
        <position position="255"/>
    </location>
</feature>
<feature type="binding site" evidence="1">
    <location>
        <position position="45"/>
    </location>
    <ligand>
        <name>substrate</name>
    </ligand>
</feature>
<feature type="binding site" evidence="1">
    <location>
        <position position="67"/>
    </location>
    <ligand>
        <name>substrate</name>
    </ligand>
</feature>
<feature type="binding site" evidence="1">
    <location>
        <position position="147"/>
    </location>
    <ligand>
        <name>NAD(+)</name>
        <dbReference type="ChEBI" id="CHEBI:57540"/>
    </ligand>
</feature>
<feature type="binding site" evidence="1">
    <location>
        <position position="233"/>
    </location>
    <ligand>
        <name>NAD(+)</name>
        <dbReference type="ChEBI" id="CHEBI:57540"/>
    </ligand>
</feature>
<feature type="binding site" evidence="1">
    <location>
        <position position="258"/>
    </location>
    <ligand>
        <name>NAD(+)</name>
        <dbReference type="ChEBI" id="CHEBI:57540"/>
    </ligand>
</feature>
<feature type="binding site" evidence="1">
    <location>
        <position position="259"/>
    </location>
    <ligand>
        <name>substrate</name>
    </ligand>
</feature>
<protein>
    <recommendedName>
        <fullName evidence="1">Erythronate-4-phosphate dehydrogenase</fullName>
        <ecNumber evidence="1">1.1.1.290</ecNumber>
    </recommendedName>
</protein>
<accession>A1RIA7</accession>
<reference key="1">
    <citation type="submission" date="2006-12" db="EMBL/GenBank/DDBJ databases">
        <title>Complete sequence of Shewanella sp. W3-18-1.</title>
        <authorList>
            <consortium name="US DOE Joint Genome Institute"/>
            <person name="Copeland A."/>
            <person name="Lucas S."/>
            <person name="Lapidus A."/>
            <person name="Barry K."/>
            <person name="Detter J.C."/>
            <person name="Glavina del Rio T."/>
            <person name="Hammon N."/>
            <person name="Israni S."/>
            <person name="Dalin E."/>
            <person name="Tice H."/>
            <person name="Pitluck S."/>
            <person name="Chain P."/>
            <person name="Malfatti S."/>
            <person name="Shin M."/>
            <person name="Vergez L."/>
            <person name="Schmutz J."/>
            <person name="Larimer F."/>
            <person name="Land M."/>
            <person name="Hauser L."/>
            <person name="Kyrpides N."/>
            <person name="Lykidis A."/>
            <person name="Tiedje J."/>
            <person name="Richardson P."/>
        </authorList>
    </citation>
    <scope>NUCLEOTIDE SEQUENCE [LARGE SCALE GENOMIC DNA]</scope>
    <source>
        <strain>W3-18-1</strain>
    </source>
</reference>
<name>PDXB_SHESW</name>
<sequence length="376" mass="41663">MKILVDENMPFVEPLFGDLGEIIPVNGRTLTVAQVRDADVLLVRSVTKVNAELLSDNHQLKFVGSATIGTDHVDLAYLGERNIPFSNAPGCNATAVGEFAFIAMLELAQRFDSPLKGKVVGIVGAGNTGTATAKCLQAYGIKVLLNDPIKEKQGDPRSFVSLETIMAQADIISLHVPITRTGEHKTKHLLDEARLTALKPNTWLVNCCRGDVIDNKALVRVKRQRDDLRLVLDVWEGEPTPMPELVPLAEFATPHIAGYSLEGKARGTFMLYQKLCQLLNIAADKSLLDLLPSFNIKAVELATAPDEKALLQLARFVYDLRDDDNMFRNIFLNENGFDTMRKNHRHRREFSALALAYDRQLEVDWLSNLGFSGVGQ</sequence>
<comment type="function">
    <text evidence="1">Catalyzes the oxidation of erythronate-4-phosphate to 3-hydroxy-2-oxo-4-phosphonooxybutanoate.</text>
</comment>
<comment type="catalytic activity">
    <reaction evidence="1">
        <text>4-phospho-D-erythronate + NAD(+) = (R)-3-hydroxy-2-oxo-4-phosphooxybutanoate + NADH + H(+)</text>
        <dbReference type="Rhea" id="RHEA:18829"/>
        <dbReference type="ChEBI" id="CHEBI:15378"/>
        <dbReference type="ChEBI" id="CHEBI:57540"/>
        <dbReference type="ChEBI" id="CHEBI:57945"/>
        <dbReference type="ChEBI" id="CHEBI:58538"/>
        <dbReference type="ChEBI" id="CHEBI:58766"/>
        <dbReference type="EC" id="1.1.1.290"/>
    </reaction>
</comment>
<comment type="pathway">
    <text evidence="1">Cofactor biosynthesis; pyridoxine 5'-phosphate biosynthesis; pyridoxine 5'-phosphate from D-erythrose 4-phosphate: step 2/5.</text>
</comment>
<comment type="subunit">
    <text evidence="1">Homodimer.</text>
</comment>
<comment type="subcellular location">
    <subcellularLocation>
        <location evidence="1">Cytoplasm</location>
    </subcellularLocation>
</comment>
<comment type="similarity">
    <text evidence="1">Belongs to the D-isomer specific 2-hydroxyacid dehydrogenase family. PdxB subfamily.</text>
</comment>
<organism>
    <name type="scientific">Shewanella sp. (strain W3-18-1)</name>
    <dbReference type="NCBI Taxonomy" id="351745"/>
    <lineage>
        <taxon>Bacteria</taxon>
        <taxon>Pseudomonadati</taxon>
        <taxon>Pseudomonadota</taxon>
        <taxon>Gammaproteobacteria</taxon>
        <taxon>Alteromonadales</taxon>
        <taxon>Shewanellaceae</taxon>
        <taxon>Shewanella</taxon>
    </lineage>
</organism>
<evidence type="ECO:0000255" key="1">
    <source>
        <dbReference type="HAMAP-Rule" id="MF_01825"/>
    </source>
</evidence>